<accession>Q6AY92</accession>
<comment type="subcellular location">
    <subcellularLocation>
        <location evidence="1">Membrane</location>
        <topology evidence="1">Multi-pass membrane protein</topology>
    </subcellularLocation>
</comment>
<comment type="tissue specificity">
    <text evidence="4">Expressed in colon, kidney and ileum.</text>
</comment>
<comment type="similarity">
    <text evidence="5">Belongs to the CTL (choline transporter-like) family.</text>
</comment>
<keyword id="KW-0325">Glycoprotein</keyword>
<keyword id="KW-0472">Membrane</keyword>
<keyword id="KW-1185">Reference proteome</keyword>
<keyword id="KW-0812">Transmembrane</keyword>
<keyword id="KW-1133">Transmembrane helix</keyword>
<evidence type="ECO:0000250" key="1"/>
<evidence type="ECO:0000255" key="2"/>
<evidence type="ECO:0000256" key="3">
    <source>
        <dbReference type="SAM" id="MobiDB-lite"/>
    </source>
</evidence>
<evidence type="ECO:0000269" key="4">
    <source>
    </source>
</evidence>
<evidence type="ECO:0000305" key="5"/>
<reference key="1">
    <citation type="journal article" date="2004" name="Genome Res.">
        <title>The status, quality, and expansion of the NIH full-length cDNA project: the Mammalian Gene Collection (MGC).</title>
        <authorList>
            <consortium name="The MGC Project Team"/>
        </authorList>
    </citation>
    <scope>NUCLEOTIDE SEQUENCE [LARGE SCALE MRNA]</scope>
    <source>
        <tissue>Kidney</tissue>
    </source>
</reference>
<reference key="2">
    <citation type="journal article" date="2005" name="J. Neurochem.">
        <title>Molecular characterization of the family of choline transporter-like proteins and their splice variants.</title>
        <authorList>
            <person name="Traiffort E."/>
            <person name="Ruat M."/>
            <person name="O'Regan S."/>
            <person name="Meunier F.-M."/>
        </authorList>
    </citation>
    <scope>TISSUE SPECIFICITY</scope>
    <source>
        <strain>Wistar</strain>
        <tissue>Brain</tissue>
    </source>
</reference>
<sequence length="604" mass="67679">MGYSVVAGAAGRLLFGYDSFGNVCGKRNSPVEGAPLSGQDMTLKKHVFFMNACNLEVKDRGRGPMALCVSSCPEKQLDTLEEVQLFANINGSFLCVYSLNSFNYTQSPSADRLCPRLPVPPSKPFPLFNRCIPQTPECYSLFASVLLNDADALHRILSGIMAGRDTILGLCAFVFALSLAMLFTFRFISTLLVHIIISLVILGLLFVCGVFWWLYYDYTNDLSTELDTEKENMKCMLAFAVITTVVTVVLLALIFTLRKRVKLTVELLRVTNKAISRCPFLLLQPLWTFAILVFFWVLWVAVLLSLGTAGTAQVMEGGQVEYKPLSGIRYLWWYHLIGLIWTSEFILTCQRMTVAGAMVTCYFNRNQNDPPARPILSSLSTLFCYHQGTAVKGSLLLTVTRIPRVIFMYIYSTVKERHSAWPRGEFRCSYCGLWCLTNYPYHLNQDAYAAAAINGTDFCTSAKDAHTIISKNSSHLTSVNCFGNFIIFLGKVLVVCFSVFGGLMAFNYNRALQVWAIPLLLVAFFAYLAAHSFLSVFETVLDTLFLCFAVDLETNDGSSEKPYFMDPGFLSFVKRTDHFNNARSQGHKNSLPNEEGTELRPIVR</sequence>
<gene>
    <name type="primary">Slc44a3</name>
    <name type="synonym">Ctl3</name>
</gene>
<organism>
    <name type="scientific">Rattus norvegicus</name>
    <name type="common">Rat</name>
    <dbReference type="NCBI Taxonomy" id="10116"/>
    <lineage>
        <taxon>Eukaryota</taxon>
        <taxon>Metazoa</taxon>
        <taxon>Chordata</taxon>
        <taxon>Craniata</taxon>
        <taxon>Vertebrata</taxon>
        <taxon>Euteleostomi</taxon>
        <taxon>Mammalia</taxon>
        <taxon>Eutheria</taxon>
        <taxon>Euarchontoglires</taxon>
        <taxon>Glires</taxon>
        <taxon>Rodentia</taxon>
        <taxon>Myomorpha</taxon>
        <taxon>Muroidea</taxon>
        <taxon>Muridae</taxon>
        <taxon>Murinae</taxon>
        <taxon>Rattus</taxon>
    </lineage>
</organism>
<feature type="chain" id="PRO_0000191722" description="Choline transporter-like protein 3">
    <location>
        <begin position="1"/>
        <end position="604"/>
    </location>
</feature>
<feature type="transmembrane region" description="Helical" evidence="2">
    <location>
        <begin position="165"/>
        <end position="185"/>
    </location>
</feature>
<feature type="transmembrane region" description="Helical" evidence="2">
    <location>
        <begin position="195"/>
        <end position="215"/>
    </location>
</feature>
<feature type="transmembrane region" description="Helical" evidence="2">
    <location>
        <begin position="237"/>
        <end position="257"/>
    </location>
</feature>
<feature type="transmembrane region" description="Helical" evidence="2">
    <location>
        <begin position="286"/>
        <end position="306"/>
    </location>
</feature>
<feature type="transmembrane region" description="Helical" evidence="2">
    <location>
        <begin position="330"/>
        <end position="350"/>
    </location>
</feature>
<feature type="transmembrane region" description="Helical" evidence="2">
    <location>
        <begin position="485"/>
        <end position="505"/>
    </location>
</feature>
<feature type="transmembrane region" description="Helical" evidence="2">
    <location>
        <begin position="514"/>
        <end position="534"/>
    </location>
</feature>
<feature type="region of interest" description="Disordered" evidence="3">
    <location>
        <begin position="581"/>
        <end position="604"/>
    </location>
</feature>
<feature type="compositionally biased region" description="Polar residues" evidence="3">
    <location>
        <begin position="581"/>
        <end position="592"/>
    </location>
</feature>
<feature type="glycosylation site" description="N-linked (GlcNAc...) asparagine" evidence="2">
    <location>
        <position position="90"/>
    </location>
</feature>
<feature type="glycosylation site" description="N-linked (GlcNAc...) asparagine" evidence="2">
    <location>
        <position position="103"/>
    </location>
</feature>
<feature type="glycosylation site" description="N-linked (GlcNAc...) asparagine" evidence="2">
    <location>
        <position position="454"/>
    </location>
</feature>
<feature type="glycosylation site" description="N-linked (GlcNAc...) asparagine" evidence="2">
    <location>
        <position position="472"/>
    </location>
</feature>
<dbReference type="EMBL" id="BC079142">
    <property type="protein sequence ID" value="AAH79142.1"/>
    <property type="molecule type" value="mRNA"/>
</dbReference>
<dbReference type="RefSeq" id="NP_001013936.1">
    <property type="nucleotide sequence ID" value="NM_001013914.1"/>
</dbReference>
<dbReference type="SMR" id="Q6AY92"/>
<dbReference type="FunCoup" id="Q6AY92">
    <property type="interactions" value="542"/>
</dbReference>
<dbReference type="STRING" id="10116.ENSRNOP00000052570"/>
<dbReference type="GlyCosmos" id="Q6AY92">
    <property type="glycosylation" value="4 sites, No reported glycans"/>
</dbReference>
<dbReference type="GlyGen" id="Q6AY92">
    <property type="glycosylation" value="4 sites"/>
</dbReference>
<dbReference type="iPTMnet" id="Q6AY92"/>
<dbReference type="PhosphoSitePlus" id="Q6AY92"/>
<dbReference type="PaxDb" id="10116-ENSRNOP00000052570"/>
<dbReference type="GeneID" id="295417"/>
<dbReference type="KEGG" id="rno:295417"/>
<dbReference type="UCSC" id="RGD:1305808">
    <property type="organism name" value="rat"/>
</dbReference>
<dbReference type="AGR" id="RGD:1305808"/>
<dbReference type="CTD" id="126969"/>
<dbReference type="RGD" id="1305808">
    <property type="gene designation" value="Slc44a3"/>
</dbReference>
<dbReference type="eggNOG" id="KOG1362">
    <property type="taxonomic scope" value="Eukaryota"/>
</dbReference>
<dbReference type="InParanoid" id="Q6AY92"/>
<dbReference type="PhylomeDB" id="Q6AY92"/>
<dbReference type="Reactome" id="R-RNO-1483191">
    <property type="pathway name" value="Synthesis of PC"/>
</dbReference>
<dbReference type="Reactome" id="R-RNO-425366">
    <property type="pathway name" value="Transport of bile salts and organic acids, metal ions and amine compounds"/>
</dbReference>
<dbReference type="PRO" id="PR:Q6AY92"/>
<dbReference type="Proteomes" id="UP000002494">
    <property type="component" value="Unplaced"/>
</dbReference>
<dbReference type="GO" id="GO:0016020">
    <property type="term" value="C:membrane"/>
    <property type="evidence" value="ECO:0000318"/>
    <property type="project" value="GO_Central"/>
</dbReference>
<dbReference type="GO" id="GO:0015101">
    <property type="term" value="F:organic cation transmembrane transporter activity"/>
    <property type="evidence" value="ECO:0007669"/>
    <property type="project" value="UniProtKB-ARBA"/>
</dbReference>
<dbReference type="GO" id="GO:0022857">
    <property type="term" value="F:transmembrane transporter activity"/>
    <property type="evidence" value="ECO:0000318"/>
    <property type="project" value="GO_Central"/>
</dbReference>
<dbReference type="GO" id="GO:0055085">
    <property type="term" value="P:transmembrane transport"/>
    <property type="evidence" value="ECO:0000318"/>
    <property type="project" value="GO_Central"/>
</dbReference>
<dbReference type="InterPro" id="IPR007603">
    <property type="entry name" value="Choline_transptr-like"/>
</dbReference>
<dbReference type="PANTHER" id="PTHR12385">
    <property type="entry name" value="CHOLINE TRANSPORTER-LIKE (SLC FAMILY 44)"/>
    <property type="match status" value="1"/>
</dbReference>
<dbReference type="PANTHER" id="PTHR12385:SF13">
    <property type="entry name" value="CHOLINE TRANSPORTER-LIKE PROTEIN 3"/>
    <property type="match status" value="1"/>
</dbReference>
<dbReference type="Pfam" id="PF04515">
    <property type="entry name" value="Choline_transpo"/>
    <property type="match status" value="1"/>
</dbReference>
<proteinExistence type="evidence at transcript level"/>
<name>CTL3_RAT</name>
<protein>
    <recommendedName>
        <fullName>Choline transporter-like protein 3</fullName>
    </recommendedName>
    <alternativeName>
        <fullName>Solute carrier family 44 member 3</fullName>
    </alternativeName>
</protein>